<proteinExistence type="inferred from homology"/>
<organism>
    <name type="scientific">Rhodobacter capsulatus (strain ATCC BAA-309 / NBRC 16581 / SB1003)</name>
    <dbReference type="NCBI Taxonomy" id="272942"/>
    <lineage>
        <taxon>Bacteria</taxon>
        <taxon>Pseudomonadati</taxon>
        <taxon>Pseudomonadota</taxon>
        <taxon>Alphaproteobacteria</taxon>
        <taxon>Rhodobacterales</taxon>
        <taxon>Rhodobacter group</taxon>
        <taxon>Rhodobacter</taxon>
    </lineage>
</organism>
<feature type="chain" id="PRO_0000410699" description="Protein pufQ">
    <location>
        <begin position="1"/>
        <end position="74"/>
    </location>
</feature>
<evidence type="ECO:0000305" key="1"/>
<keyword id="KW-0077">Bacteriochlorophyll biosynthesis</keyword>
<keyword id="KW-0149">Chlorophyll biosynthesis</keyword>
<keyword id="KW-0602">Photosynthesis</keyword>
<keyword id="KW-1185">Reference proteome</keyword>
<sequence>MQSQRLRAHGVQHVDRVPRPEFALYFSLILIVAVPFALVGWVMALVRERRIPECGPFARAWREAGEITPEIFRP</sequence>
<gene>
    <name type="primary">pufQ</name>
    <name type="ordered locus">RCAP_rcc00690</name>
</gene>
<dbReference type="EMBL" id="M20141">
    <property type="protein sequence ID" value="AAA26169.1"/>
    <property type="molecule type" value="Genomic_DNA"/>
</dbReference>
<dbReference type="EMBL" id="Z11165">
    <property type="protein sequence ID" value="CAA77551.1"/>
    <property type="molecule type" value="Genomic_DNA"/>
</dbReference>
<dbReference type="EMBL" id="CP001312">
    <property type="protein sequence ID" value="ADE84455.1"/>
    <property type="molecule type" value="Genomic_DNA"/>
</dbReference>
<dbReference type="PIR" id="A32253">
    <property type="entry name" value="A32253"/>
</dbReference>
<dbReference type="RefSeq" id="WP_013066434.1">
    <property type="nucleotide sequence ID" value="NC_014034.1"/>
</dbReference>
<dbReference type="SMR" id="D5AP83"/>
<dbReference type="STRING" id="272942.RCAP_rcc00690"/>
<dbReference type="GeneID" id="31489636"/>
<dbReference type="KEGG" id="rcp:RCAP_rcc00690"/>
<dbReference type="HOGENOM" id="CLU_196699_0_0_5"/>
<dbReference type="OrthoDB" id="7872505at2"/>
<dbReference type="Proteomes" id="UP000002361">
    <property type="component" value="Chromosome"/>
</dbReference>
<dbReference type="GO" id="GO:0030494">
    <property type="term" value="P:bacteriochlorophyll biosynthetic process"/>
    <property type="evidence" value="ECO:0007669"/>
    <property type="project" value="UniProtKB-KW"/>
</dbReference>
<dbReference type="GO" id="GO:0015979">
    <property type="term" value="P:photosynthesis"/>
    <property type="evidence" value="ECO:0007669"/>
    <property type="project" value="UniProtKB-KW"/>
</dbReference>
<dbReference type="InterPro" id="IPR008800">
    <property type="entry name" value="PufQ_cyt-su"/>
</dbReference>
<dbReference type="Pfam" id="PF05398">
    <property type="entry name" value="PufQ"/>
    <property type="match status" value="1"/>
</dbReference>
<dbReference type="PIRSF" id="PIRSF005825">
    <property type="entry name" value="PufQ"/>
    <property type="match status" value="1"/>
</dbReference>
<protein>
    <recommendedName>
        <fullName>Protein pufQ</fullName>
    </recommendedName>
</protein>
<comment type="function">
    <text>Required for bacteriochlorophyll biosynthesis. Directly involved in the assembly of both the B875 and B800-850 pigment-protein complexes.</text>
</comment>
<comment type="similarity">
    <text evidence="1">Belongs to the PufQ family.</text>
</comment>
<name>PUFQ_RHOCB</name>
<reference key="1">
    <citation type="journal article" date="1988" name="J. Biol. Chem.">
        <title>Analysis of the Rhodobacter capsulatus puf operon. Location of the oxygen-regulated promoter region and the identification of an additional puf-encoded gene.</title>
        <authorList>
            <person name="Bauer C.E."/>
            <person name="Young D.A."/>
            <person name="Marrs B.L."/>
        </authorList>
    </citation>
    <scope>NUCLEOTIDE SEQUENCE [GENOMIC DNA]</scope>
    <source>
        <strain>ATCC BAA-309 / NBRC 16581 / SB1003</strain>
    </source>
</reference>
<reference key="2">
    <citation type="journal article" date="2010" name="J. Bacteriol.">
        <title>Complete genome sequence of the photosynthetic purple nonsulfur bacterium Rhodobacter capsulatus SB 1003.</title>
        <authorList>
            <person name="Strnad H."/>
            <person name="Lapidus A."/>
            <person name="Paces J."/>
            <person name="Ulbrich P."/>
            <person name="Vlcek C."/>
            <person name="Paces V."/>
            <person name="Haselkorn R."/>
        </authorList>
    </citation>
    <scope>NUCLEOTIDE SEQUENCE [LARGE SCALE GENOMIC DNA]</scope>
    <source>
        <strain>ATCC BAA-309 / NBRC 16581 / SB1003</strain>
    </source>
</reference>
<reference key="3">
    <citation type="journal article" date="1993" name="J. Bacteriol.">
        <title>The Rhodobacter capsulatus chlorin reductase-encoding locus, bchA, consists of three genes, bchX, bchY, and bchZ.</title>
        <authorList>
            <person name="Burke D.H."/>
            <person name="Alberti M."/>
            <person name="Hearst J.E."/>
        </authorList>
    </citation>
    <scope>NUCLEOTIDE SEQUENCE [GENOMIC DNA] OF 1-29</scope>
    <source>
        <strain>ATCC BAA-309 / NBRC 16581 / SB1003</strain>
    </source>
</reference>
<accession>D5AP83</accession>
<accession>P14601</accession>